<organism>
    <name type="scientific">Acidithiobacillus ferrooxidans (strain ATCC 23270 / DSM 14882 / CIP 104768 / NCIMB 8455)</name>
    <name type="common">Ferrobacillus ferrooxidans (strain ATCC 23270)</name>
    <dbReference type="NCBI Taxonomy" id="243159"/>
    <lineage>
        <taxon>Bacteria</taxon>
        <taxon>Pseudomonadati</taxon>
        <taxon>Pseudomonadota</taxon>
        <taxon>Acidithiobacillia</taxon>
        <taxon>Acidithiobacillales</taxon>
        <taxon>Acidithiobacillaceae</taxon>
        <taxon>Acidithiobacillus</taxon>
    </lineage>
</organism>
<gene>
    <name evidence="1" type="primary">thiC</name>
    <name type="ordered locus">AFE_0948</name>
</gene>
<accession>B7J7C4</accession>
<evidence type="ECO:0000255" key="1">
    <source>
        <dbReference type="HAMAP-Rule" id="MF_00089"/>
    </source>
</evidence>
<sequence>MATRPTDMVNTMQDAAVTCGPIPGSHKRYLGGVRFPELRIPLREIRQSDSRKRDGSLEVNPAIPVYDCSGPYTDPDVVIDIHAGLPAMRWQWSPTDTAIESRPEPGSAYGRARLADVRTADLRFHHRREIRRAANGGNVSQMHYARRGIITPEMEFVAIRENQGLEHLRASHPALFRAHRGESFGAQIPDTITPEFVRDEIARGRAIIPANINHPELEPMIIGRNFLVKINANIGNSAVTSSIAEEVEKMVWSIRWGADTVMDLSTGRHIHETREWIIRNSPVPIGTVPIYQALEKVDGKAEDLTWDLFRDTLIEQAEQGVDYFTIHAGVLLRYIPLTANRLTGIVSRGGSIMAKWCLAHHQESFLYTHFEEICEIMKAYDVSFSLGDGLRPGSLADANDEAQFAELHTLGELTRIAWKHDVQVMIEGPGHVPMQLIKANMEEELQHCFEAPFYTLGPLTTDIAPGYDHITSAIGAAQIGWYGTAMLCYVTPKEHLGLPDKNDVREGAITYKIAAHAADLAKGHPGAQVRDNALSKARFEFRWEDQFHLGLDPEKAREYHDETLPQEGAKAAHFCSMCGPHFCSMKISQDLQEYAQSKGEDIETARLEGLQEKAEDFKRLGKNIYLR</sequence>
<reference key="1">
    <citation type="journal article" date="2008" name="BMC Genomics">
        <title>Acidithiobacillus ferrooxidans metabolism: from genome sequence to industrial applications.</title>
        <authorList>
            <person name="Valdes J."/>
            <person name="Pedroso I."/>
            <person name="Quatrini R."/>
            <person name="Dodson R.J."/>
            <person name="Tettelin H."/>
            <person name="Blake R. II"/>
            <person name="Eisen J.A."/>
            <person name="Holmes D.S."/>
        </authorList>
    </citation>
    <scope>NUCLEOTIDE SEQUENCE [LARGE SCALE GENOMIC DNA]</scope>
    <source>
        <strain>ATCC 23270 / DSM 14882 / CIP 104768 / NCIMB 8455</strain>
    </source>
</reference>
<name>THIC_ACIF2</name>
<keyword id="KW-0004">4Fe-4S</keyword>
<keyword id="KW-0408">Iron</keyword>
<keyword id="KW-0411">Iron-sulfur</keyword>
<keyword id="KW-0456">Lyase</keyword>
<keyword id="KW-0479">Metal-binding</keyword>
<keyword id="KW-1185">Reference proteome</keyword>
<keyword id="KW-0949">S-adenosyl-L-methionine</keyword>
<keyword id="KW-0784">Thiamine biosynthesis</keyword>
<keyword id="KW-0862">Zinc</keyword>
<comment type="function">
    <text evidence="1">Catalyzes the synthesis of the hydroxymethylpyrimidine phosphate (HMP-P) moiety of thiamine from aminoimidazole ribotide (AIR) in a radical S-adenosyl-L-methionine (SAM)-dependent reaction.</text>
</comment>
<comment type="catalytic activity">
    <reaction evidence="1">
        <text>5-amino-1-(5-phospho-beta-D-ribosyl)imidazole + S-adenosyl-L-methionine = 4-amino-2-methyl-5-(phosphooxymethyl)pyrimidine + CO + 5'-deoxyadenosine + formate + L-methionine + 3 H(+)</text>
        <dbReference type="Rhea" id="RHEA:24840"/>
        <dbReference type="ChEBI" id="CHEBI:15378"/>
        <dbReference type="ChEBI" id="CHEBI:15740"/>
        <dbReference type="ChEBI" id="CHEBI:17245"/>
        <dbReference type="ChEBI" id="CHEBI:17319"/>
        <dbReference type="ChEBI" id="CHEBI:57844"/>
        <dbReference type="ChEBI" id="CHEBI:58354"/>
        <dbReference type="ChEBI" id="CHEBI:59789"/>
        <dbReference type="ChEBI" id="CHEBI:137981"/>
        <dbReference type="EC" id="4.1.99.17"/>
    </reaction>
</comment>
<comment type="cofactor">
    <cofactor evidence="1">
        <name>[4Fe-4S] cluster</name>
        <dbReference type="ChEBI" id="CHEBI:49883"/>
    </cofactor>
    <text evidence="1">Binds 1 [4Fe-4S] cluster per subunit. The cluster is coordinated with 3 cysteines and an exchangeable S-adenosyl-L-methionine.</text>
</comment>
<comment type="pathway">
    <text evidence="1">Cofactor biosynthesis; thiamine diphosphate biosynthesis.</text>
</comment>
<comment type="subunit">
    <text evidence="1">Homodimer.</text>
</comment>
<comment type="similarity">
    <text evidence="1">Belongs to the ThiC family.</text>
</comment>
<feature type="chain" id="PRO_1000198039" description="Phosphomethylpyrimidine synthase">
    <location>
        <begin position="1"/>
        <end position="627"/>
    </location>
</feature>
<feature type="binding site" evidence="1">
    <location>
        <position position="233"/>
    </location>
    <ligand>
        <name>substrate</name>
    </ligand>
</feature>
<feature type="binding site" evidence="1">
    <location>
        <position position="262"/>
    </location>
    <ligand>
        <name>substrate</name>
    </ligand>
</feature>
<feature type="binding site" evidence="1">
    <location>
        <position position="291"/>
    </location>
    <ligand>
        <name>substrate</name>
    </ligand>
</feature>
<feature type="binding site" evidence="1">
    <location>
        <position position="327"/>
    </location>
    <ligand>
        <name>substrate</name>
    </ligand>
</feature>
<feature type="binding site" evidence="1">
    <location>
        <begin position="347"/>
        <end position="349"/>
    </location>
    <ligand>
        <name>substrate</name>
    </ligand>
</feature>
<feature type="binding site" evidence="1">
    <location>
        <begin position="388"/>
        <end position="391"/>
    </location>
    <ligand>
        <name>substrate</name>
    </ligand>
</feature>
<feature type="binding site" evidence="1">
    <location>
        <position position="427"/>
    </location>
    <ligand>
        <name>substrate</name>
    </ligand>
</feature>
<feature type="binding site" evidence="1">
    <location>
        <position position="431"/>
    </location>
    <ligand>
        <name>Zn(2+)</name>
        <dbReference type="ChEBI" id="CHEBI:29105"/>
    </ligand>
</feature>
<feature type="binding site" evidence="1">
    <location>
        <position position="454"/>
    </location>
    <ligand>
        <name>substrate</name>
    </ligand>
</feature>
<feature type="binding site" evidence="1">
    <location>
        <position position="495"/>
    </location>
    <ligand>
        <name>Zn(2+)</name>
        <dbReference type="ChEBI" id="CHEBI:29105"/>
    </ligand>
</feature>
<feature type="binding site" evidence="1">
    <location>
        <position position="575"/>
    </location>
    <ligand>
        <name>[4Fe-4S] cluster</name>
        <dbReference type="ChEBI" id="CHEBI:49883"/>
        <note>4Fe-4S-S-AdoMet</note>
    </ligand>
</feature>
<feature type="binding site" evidence="1">
    <location>
        <position position="578"/>
    </location>
    <ligand>
        <name>[4Fe-4S] cluster</name>
        <dbReference type="ChEBI" id="CHEBI:49883"/>
        <note>4Fe-4S-S-AdoMet</note>
    </ligand>
</feature>
<feature type="binding site" evidence="1">
    <location>
        <position position="583"/>
    </location>
    <ligand>
        <name>[4Fe-4S] cluster</name>
        <dbReference type="ChEBI" id="CHEBI:49883"/>
        <note>4Fe-4S-S-AdoMet</note>
    </ligand>
</feature>
<protein>
    <recommendedName>
        <fullName evidence="1">Phosphomethylpyrimidine synthase</fullName>
        <ecNumber evidence="1">4.1.99.17</ecNumber>
    </recommendedName>
    <alternativeName>
        <fullName evidence="1">Hydroxymethylpyrimidine phosphate synthase</fullName>
        <shortName evidence="1">HMP-P synthase</shortName>
        <shortName evidence="1">HMP-phosphate synthase</shortName>
        <shortName evidence="1">HMPP synthase</shortName>
    </alternativeName>
    <alternativeName>
        <fullName evidence="1">Thiamine biosynthesis protein ThiC</fullName>
    </alternativeName>
</protein>
<dbReference type="EC" id="4.1.99.17" evidence="1"/>
<dbReference type="EMBL" id="CP001219">
    <property type="protein sequence ID" value="ACK78051.1"/>
    <property type="molecule type" value="Genomic_DNA"/>
</dbReference>
<dbReference type="SMR" id="B7J7C4"/>
<dbReference type="STRING" id="243159.AFE_0948"/>
<dbReference type="PaxDb" id="243159-AFE_0948"/>
<dbReference type="KEGG" id="afr:AFE_0948"/>
<dbReference type="eggNOG" id="COG0422">
    <property type="taxonomic scope" value="Bacteria"/>
</dbReference>
<dbReference type="HOGENOM" id="CLU_013181_2_1_6"/>
<dbReference type="UniPathway" id="UPA00060"/>
<dbReference type="Proteomes" id="UP000001362">
    <property type="component" value="Chromosome"/>
</dbReference>
<dbReference type="GO" id="GO:0005829">
    <property type="term" value="C:cytosol"/>
    <property type="evidence" value="ECO:0007669"/>
    <property type="project" value="TreeGrafter"/>
</dbReference>
<dbReference type="GO" id="GO:0051539">
    <property type="term" value="F:4 iron, 4 sulfur cluster binding"/>
    <property type="evidence" value="ECO:0007669"/>
    <property type="project" value="UniProtKB-KW"/>
</dbReference>
<dbReference type="GO" id="GO:0016830">
    <property type="term" value="F:carbon-carbon lyase activity"/>
    <property type="evidence" value="ECO:0007669"/>
    <property type="project" value="InterPro"/>
</dbReference>
<dbReference type="GO" id="GO:0008270">
    <property type="term" value="F:zinc ion binding"/>
    <property type="evidence" value="ECO:0007669"/>
    <property type="project" value="UniProtKB-UniRule"/>
</dbReference>
<dbReference type="GO" id="GO:0009228">
    <property type="term" value="P:thiamine biosynthetic process"/>
    <property type="evidence" value="ECO:0007669"/>
    <property type="project" value="UniProtKB-KW"/>
</dbReference>
<dbReference type="GO" id="GO:0009229">
    <property type="term" value="P:thiamine diphosphate biosynthetic process"/>
    <property type="evidence" value="ECO:0007669"/>
    <property type="project" value="UniProtKB-UniRule"/>
</dbReference>
<dbReference type="FunFam" id="3.20.20.540:FF:000001">
    <property type="entry name" value="Phosphomethylpyrimidine synthase"/>
    <property type="match status" value="1"/>
</dbReference>
<dbReference type="Gene3D" id="6.10.250.620">
    <property type="match status" value="1"/>
</dbReference>
<dbReference type="Gene3D" id="3.20.20.540">
    <property type="entry name" value="Radical SAM ThiC family, central domain"/>
    <property type="match status" value="1"/>
</dbReference>
<dbReference type="HAMAP" id="MF_00089">
    <property type="entry name" value="ThiC"/>
    <property type="match status" value="1"/>
</dbReference>
<dbReference type="InterPro" id="IPR037509">
    <property type="entry name" value="ThiC"/>
</dbReference>
<dbReference type="InterPro" id="IPR025747">
    <property type="entry name" value="ThiC-associated_dom"/>
</dbReference>
<dbReference type="InterPro" id="IPR038521">
    <property type="entry name" value="ThiC/Bza_core_dom"/>
</dbReference>
<dbReference type="InterPro" id="IPR002817">
    <property type="entry name" value="ThiC/BzaA/B"/>
</dbReference>
<dbReference type="NCBIfam" id="NF006763">
    <property type="entry name" value="PRK09284.1"/>
    <property type="match status" value="1"/>
</dbReference>
<dbReference type="NCBIfam" id="NF009895">
    <property type="entry name" value="PRK13352.1"/>
    <property type="match status" value="1"/>
</dbReference>
<dbReference type="NCBIfam" id="TIGR00190">
    <property type="entry name" value="thiC"/>
    <property type="match status" value="1"/>
</dbReference>
<dbReference type="PANTHER" id="PTHR30557:SF1">
    <property type="entry name" value="PHOSPHOMETHYLPYRIMIDINE SYNTHASE, CHLOROPLASTIC"/>
    <property type="match status" value="1"/>
</dbReference>
<dbReference type="PANTHER" id="PTHR30557">
    <property type="entry name" value="THIAMINE BIOSYNTHESIS PROTEIN THIC"/>
    <property type="match status" value="1"/>
</dbReference>
<dbReference type="Pfam" id="PF13667">
    <property type="entry name" value="ThiC-associated"/>
    <property type="match status" value="1"/>
</dbReference>
<dbReference type="Pfam" id="PF01964">
    <property type="entry name" value="ThiC_Rad_SAM"/>
    <property type="match status" value="1"/>
</dbReference>
<dbReference type="SFLD" id="SFLDF00407">
    <property type="entry name" value="phosphomethylpyrimidine_syntha"/>
    <property type="match status" value="1"/>
</dbReference>
<dbReference type="SFLD" id="SFLDG01114">
    <property type="entry name" value="phosphomethylpyrimidine_syntha"/>
    <property type="match status" value="1"/>
</dbReference>
<dbReference type="SFLD" id="SFLDS00113">
    <property type="entry name" value="Radical_SAM_Phosphomethylpyrim"/>
    <property type="match status" value="1"/>
</dbReference>
<proteinExistence type="inferred from homology"/>